<comment type="function">
    <text evidence="1">Catalyzes the reversible oxidation of malate to oxaloacetate.</text>
</comment>
<comment type="catalytic activity">
    <reaction evidence="1">
        <text>(S)-malate + NAD(+) = oxaloacetate + NADH + H(+)</text>
        <dbReference type="Rhea" id="RHEA:21432"/>
        <dbReference type="ChEBI" id="CHEBI:15378"/>
        <dbReference type="ChEBI" id="CHEBI:15589"/>
        <dbReference type="ChEBI" id="CHEBI:16452"/>
        <dbReference type="ChEBI" id="CHEBI:57540"/>
        <dbReference type="ChEBI" id="CHEBI:57945"/>
        <dbReference type="EC" id="1.1.1.37"/>
    </reaction>
</comment>
<comment type="similarity">
    <text evidence="1">Belongs to the LDH/MDH superfamily. MDH type 3 family.</text>
</comment>
<keyword id="KW-0520">NAD</keyword>
<keyword id="KW-0560">Oxidoreductase</keyword>
<keyword id="KW-0816">Tricarboxylic acid cycle</keyword>
<gene>
    <name evidence="1" type="primary">mdh</name>
    <name type="ordered locus">BQ13450</name>
</gene>
<name>MDH_BARQU</name>
<organism>
    <name type="scientific">Bartonella quintana (strain Toulouse)</name>
    <name type="common">Rochalimaea quintana</name>
    <dbReference type="NCBI Taxonomy" id="283165"/>
    <lineage>
        <taxon>Bacteria</taxon>
        <taxon>Pseudomonadati</taxon>
        <taxon>Pseudomonadota</taxon>
        <taxon>Alphaproteobacteria</taxon>
        <taxon>Hyphomicrobiales</taxon>
        <taxon>Bartonellaceae</taxon>
        <taxon>Bartonella</taxon>
    </lineage>
</organism>
<sequence>MARKKIALIGSGMIGGTLAHMIGLKELGDVVLFDIEEGMPQGKALDIAESSPVDGFDVSLTGANVYEAIEGADVVIVTAGVARKPGMSRDDLLGINLKVMEQVGAGIKKYASSAFVICITNPLDAMVWALQKFSGLPKQKVVGMAGVLDSARFRYFLSKEFKVSVKDVTAFVLGGHGDSMVPLVRYSTVGGISLPDLVKMGWTTQEKIDQIIQRVRNGGAEIVGLLKTGSAFYAPAASAISMAEAYLKDIKRVVPVATYLSGEYGVKDTYVGVPVVLGAGGVERVIEIDLDKKERSAFEQSVNAVKKLCEACIAIAPCLK</sequence>
<feature type="chain" id="PRO_0000113438" description="Malate dehydrogenase">
    <location>
        <begin position="1"/>
        <end position="320"/>
    </location>
</feature>
<feature type="active site" description="Proton acceptor" evidence="1">
    <location>
        <position position="176"/>
    </location>
</feature>
<feature type="binding site" evidence="1">
    <location>
        <begin position="10"/>
        <end position="15"/>
    </location>
    <ligand>
        <name>NAD(+)</name>
        <dbReference type="ChEBI" id="CHEBI:57540"/>
    </ligand>
</feature>
<feature type="binding site" evidence="1">
    <location>
        <position position="34"/>
    </location>
    <ligand>
        <name>NAD(+)</name>
        <dbReference type="ChEBI" id="CHEBI:57540"/>
    </ligand>
</feature>
<feature type="binding site" evidence="1">
    <location>
        <position position="83"/>
    </location>
    <ligand>
        <name>substrate</name>
    </ligand>
</feature>
<feature type="binding site" evidence="1">
    <location>
        <position position="89"/>
    </location>
    <ligand>
        <name>substrate</name>
    </ligand>
</feature>
<feature type="binding site" evidence="1">
    <location>
        <position position="96"/>
    </location>
    <ligand>
        <name>NAD(+)</name>
        <dbReference type="ChEBI" id="CHEBI:57540"/>
    </ligand>
</feature>
<feature type="binding site" evidence="1">
    <location>
        <begin position="119"/>
        <end position="121"/>
    </location>
    <ligand>
        <name>NAD(+)</name>
        <dbReference type="ChEBI" id="CHEBI:57540"/>
    </ligand>
</feature>
<feature type="binding site" evidence="1">
    <location>
        <position position="121"/>
    </location>
    <ligand>
        <name>substrate</name>
    </ligand>
</feature>
<feature type="binding site" evidence="1">
    <location>
        <position position="152"/>
    </location>
    <ligand>
        <name>substrate</name>
    </ligand>
</feature>
<dbReference type="EC" id="1.1.1.37" evidence="1"/>
<dbReference type="EMBL" id="BX897700">
    <property type="protein sequence ID" value="CAF26803.1"/>
    <property type="molecule type" value="Genomic_DNA"/>
</dbReference>
<dbReference type="RefSeq" id="WP_011179957.1">
    <property type="nucleotide sequence ID" value="NC_005955.1"/>
</dbReference>
<dbReference type="SMR" id="Q6FYD0"/>
<dbReference type="KEGG" id="bqu:BQ13450"/>
<dbReference type="eggNOG" id="COG0039">
    <property type="taxonomic scope" value="Bacteria"/>
</dbReference>
<dbReference type="HOGENOM" id="CLU_045401_2_1_5"/>
<dbReference type="OrthoDB" id="9802969at2"/>
<dbReference type="Proteomes" id="UP000000597">
    <property type="component" value="Chromosome"/>
</dbReference>
<dbReference type="GO" id="GO:0004459">
    <property type="term" value="F:L-lactate dehydrogenase activity"/>
    <property type="evidence" value="ECO:0007669"/>
    <property type="project" value="TreeGrafter"/>
</dbReference>
<dbReference type="GO" id="GO:0030060">
    <property type="term" value="F:L-malate dehydrogenase (NAD+) activity"/>
    <property type="evidence" value="ECO:0007669"/>
    <property type="project" value="UniProtKB-UniRule"/>
</dbReference>
<dbReference type="GO" id="GO:0006089">
    <property type="term" value="P:lactate metabolic process"/>
    <property type="evidence" value="ECO:0007669"/>
    <property type="project" value="TreeGrafter"/>
</dbReference>
<dbReference type="GO" id="GO:0006099">
    <property type="term" value="P:tricarboxylic acid cycle"/>
    <property type="evidence" value="ECO:0007669"/>
    <property type="project" value="UniProtKB-UniRule"/>
</dbReference>
<dbReference type="CDD" id="cd01339">
    <property type="entry name" value="LDH-like_MDH"/>
    <property type="match status" value="1"/>
</dbReference>
<dbReference type="FunFam" id="3.40.50.720:FF:000018">
    <property type="entry name" value="Malate dehydrogenase"/>
    <property type="match status" value="1"/>
</dbReference>
<dbReference type="FunFam" id="3.90.110.10:FF:000004">
    <property type="entry name" value="Malate dehydrogenase"/>
    <property type="match status" value="1"/>
</dbReference>
<dbReference type="Gene3D" id="3.90.110.10">
    <property type="entry name" value="Lactate dehydrogenase/glycoside hydrolase, family 4, C-terminal"/>
    <property type="match status" value="1"/>
</dbReference>
<dbReference type="Gene3D" id="3.40.50.720">
    <property type="entry name" value="NAD(P)-binding Rossmann-like Domain"/>
    <property type="match status" value="1"/>
</dbReference>
<dbReference type="HAMAP" id="MF_00487">
    <property type="entry name" value="Malate_dehydrog_3"/>
    <property type="match status" value="1"/>
</dbReference>
<dbReference type="InterPro" id="IPR001557">
    <property type="entry name" value="L-lactate/malate_DH"/>
</dbReference>
<dbReference type="InterPro" id="IPR022383">
    <property type="entry name" value="Lactate/malate_DH_C"/>
</dbReference>
<dbReference type="InterPro" id="IPR001236">
    <property type="entry name" value="Lactate/malate_DH_N"/>
</dbReference>
<dbReference type="InterPro" id="IPR015955">
    <property type="entry name" value="Lactate_DH/Glyco_Ohase_4_C"/>
</dbReference>
<dbReference type="InterPro" id="IPR011275">
    <property type="entry name" value="Malate_DH_type3"/>
</dbReference>
<dbReference type="InterPro" id="IPR036291">
    <property type="entry name" value="NAD(P)-bd_dom_sf"/>
</dbReference>
<dbReference type="NCBIfam" id="TIGR01763">
    <property type="entry name" value="MalateDH_bact"/>
    <property type="match status" value="1"/>
</dbReference>
<dbReference type="NCBIfam" id="NF004863">
    <property type="entry name" value="PRK06223.1"/>
    <property type="match status" value="1"/>
</dbReference>
<dbReference type="PANTHER" id="PTHR43128">
    <property type="entry name" value="L-2-HYDROXYCARBOXYLATE DEHYDROGENASE (NAD(P)(+))"/>
    <property type="match status" value="1"/>
</dbReference>
<dbReference type="PANTHER" id="PTHR43128:SF16">
    <property type="entry name" value="L-LACTATE DEHYDROGENASE"/>
    <property type="match status" value="1"/>
</dbReference>
<dbReference type="Pfam" id="PF02866">
    <property type="entry name" value="Ldh_1_C"/>
    <property type="match status" value="1"/>
</dbReference>
<dbReference type="Pfam" id="PF00056">
    <property type="entry name" value="Ldh_1_N"/>
    <property type="match status" value="1"/>
</dbReference>
<dbReference type="PIRSF" id="PIRSF000102">
    <property type="entry name" value="Lac_mal_DH"/>
    <property type="match status" value="1"/>
</dbReference>
<dbReference type="PRINTS" id="PR00086">
    <property type="entry name" value="LLDHDRGNASE"/>
</dbReference>
<dbReference type="SUPFAM" id="SSF56327">
    <property type="entry name" value="LDH C-terminal domain-like"/>
    <property type="match status" value="1"/>
</dbReference>
<dbReference type="SUPFAM" id="SSF51735">
    <property type="entry name" value="NAD(P)-binding Rossmann-fold domains"/>
    <property type="match status" value="1"/>
</dbReference>
<protein>
    <recommendedName>
        <fullName evidence="1">Malate dehydrogenase</fullName>
        <ecNumber evidence="1">1.1.1.37</ecNumber>
    </recommendedName>
</protein>
<accession>Q6FYD0</accession>
<proteinExistence type="inferred from homology"/>
<reference key="1">
    <citation type="journal article" date="2004" name="Proc. Natl. Acad. Sci. U.S.A.">
        <title>The louse-borne human pathogen Bartonella quintana is a genomic derivative of the zoonotic agent Bartonella henselae.</title>
        <authorList>
            <person name="Alsmark U.C.M."/>
            <person name="Frank A.C."/>
            <person name="Karlberg E.O."/>
            <person name="Legault B.-A."/>
            <person name="Ardell D.H."/>
            <person name="Canbaeck B."/>
            <person name="Eriksson A.-S."/>
            <person name="Naeslund A.K."/>
            <person name="Handley S.A."/>
            <person name="Huvet M."/>
            <person name="La Scola B."/>
            <person name="Holmberg M."/>
            <person name="Andersson S.G.E."/>
        </authorList>
    </citation>
    <scope>NUCLEOTIDE SEQUENCE [LARGE SCALE GENOMIC DNA]</scope>
    <source>
        <strain>Toulouse</strain>
    </source>
</reference>
<evidence type="ECO:0000255" key="1">
    <source>
        <dbReference type="HAMAP-Rule" id="MF_00487"/>
    </source>
</evidence>